<organism>
    <name type="scientific">Trichormus variabilis (strain ATCC 29413 / PCC 7937)</name>
    <name type="common">Anabaena variabilis</name>
    <dbReference type="NCBI Taxonomy" id="240292"/>
    <lineage>
        <taxon>Bacteria</taxon>
        <taxon>Bacillati</taxon>
        <taxon>Cyanobacteriota</taxon>
        <taxon>Cyanophyceae</taxon>
        <taxon>Nostocales</taxon>
        <taxon>Nostocaceae</taxon>
        <taxon>Trichormus</taxon>
    </lineage>
</organism>
<protein>
    <recommendedName>
        <fullName evidence="1">Photosystem II reaction center protein Z</fullName>
        <shortName evidence="1">PSII-Z</shortName>
    </recommendedName>
</protein>
<proteinExistence type="inferred from homology"/>
<reference key="1">
    <citation type="journal article" date="2014" name="Stand. Genomic Sci.">
        <title>Complete genome sequence of Anabaena variabilis ATCC 29413.</title>
        <authorList>
            <person name="Thiel T."/>
            <person name="Pratte B.S."/>
            <person name="Zhong J."/>
            <person name="Goodwin L."/>
            <person name="Copeland A."/>
            <person name="Lucas S."/>
            <person name="Han C."/>
            <person name="Pitluck S."/>
            <person name="Land M.L."/>
            <person name="Kyrpides N.C."/>
            <person name="Woyke T."/>
        </authorList>
    </citation>
    <scope>NUCLEOTIDE SEQUENCE [LARGE SCALE GENOMIC DNA]</scope>
    <source>
        <strain>ATCC 29413 / PCC 7937</strain>
    </source>
</reference>
<gene>
    <name evidence="1" type="primary">psbZ</name>
    <name type="ordered locus">Ava_1705</name>
</gene>
<keyword id="KW-0472">Membrane</keyword>
<keyword id="KW-0602">Photosynthesis</keyword>
<keyword id="KW-0604">Photosystem II</keyword>
<keyword id="KW-0674">Reaction center</keyword>
<keyword id="KW-0793">Thylakoid</keyword>
<keyword id="KW-0812">Transmembrane</keyword>
<keyword id="KW-1133">Transmembrane helix</keyword>
<dbReference type="EMBL" id="CP000117">
    <property type="protein sequence ID" value="ABA21327.1"/>
    <property type="molecule type" value="Genomic_DNA"/>
</dbReference>
<dbReference type="SMR" id="Q3MCF9"/>
<dbReference type="STRING" id="240292.Ava_1705"/>
<dbReference type="KEGG" id="ava:Ava_1705"/>
<dbReference type="eggNOG" id="ENOG5032ZB0">
    <property type="taxonomic scope" value="Bacteria"/>
</dbReference>
<dbReference type="HOGENOM" id="CLU_195286_1_0_3"/>
<dbReference type="Proteomes" id="UP000002533">
    <property type="component" value="Chromosome"/>
</dbReference>
<dbReference type="GO" id="GO:0009539">
    <property type="term" value="C:photosystem II reaction center"/>
    <property type="evidence" value="ECO:0007669"/>
    <property type="project" value="InterPro"/>
</dbReference>
<dbReference type="GO" id="GO:0031676">
    <property type="term" value="C:plasma membrane-derived thylakoid membrane"/>
    <property type="evidence" value="ECO:0007669"/>
    <property type="project" value="UniProtKB-SubCell"/>
</dbReference>
<dbReference type="GO" id="GO:0015979">
    <property type="term" value="P:photosynthesis"/>
    <property type="evidence" value="ECO:0007669"/>
    <property type="project" value="UniProtKB-UniRule"/>
</dbReference>
<dbReference type="GO" id="GO:0042549">
    <property type="term" value="P:photosystem II stabilization"/>
    <property type="evidence" value="ECO:0007669"/>
    <property type="project" value="InterPro"/>
</dbReference>
<dbReference type="Gene3D" id="1.10.287.740">
    <property type="entry name" value="Photosystem II PsbZ, reaction centre"/>
    <property type="match status" value="1"/>
</dbReference>
<dbReference type="HAMAP" id="MF_00644">
    <property type="entry name" value="PSII_PsbZ"/>
    <property type="match status" value="1"/>
</dbReference>
<dbReference type="InterPro" id="IPR002644">
    <property type="entry name" value="PSII_PsbZ"/>
</dbReference>
<dbReference type="InterPro" id="IPR036512">
    <property type="entry name" value="PSII_PsbZ_sf"/>
</dbReference>
<dbReference type="NCBIfam" id="TIGR03043">
    <property type="entry name" value="PS_II_psbZ"/>
    <property type="match status" value="1"/>
</dbReference>
<dbReference type="PANTHER" id="PTHR34971">
    <property type="entry name" value="PHOTOSYSTEM II REACTION CENTER PROTEIN Z"/>
    <property type="match status" value="1"/>
</dbReference>
<dbReference type="PANTHER" id="PTHR34971:SF2">
    <property type="entry name" value="PHOTOSYSTEM II REACTION CENTER PROTEIN Z"/>
    <property type="match status" value="1"/>
</dbReference>
<dbReference type="Pfam" id="PF01737">
    <property type="entry name" value="Ycf9"/>
    <property type="match status" value="1"/>
</dbReference>
<dbReference type="SUPFAM" id="SSF161055">
    <property type="entry name" value="PsbZ-like"/>
    <property type="match status" value="1"/>
</dbReference>
<sequence>MTIIFQFALISLVLVSFVLVVGVPVAYATPQSWVESKKLLWLGSGVWIALVLLVGLLNFFVV</sequence>
<name>PSBZ_TRIV2</name>
<comment type="function">
    <text evidence="1">May control the interaction of photosystem II (PSII) cores with the light-harvesting antenna, regulates electron flow through the 2 photosystem reaction centers. PSII is a light-driven water plastoquinone oxidoreductase, using light energy to abstract electrons from H(2)O, generating a proton gradient subsequently used for ATP formation.</text>
</comment>
<comment type="subunit">
    <text evidence="1">PSII is composed of 1 copy each of membrane proteins PsbA, PsbB, PsbC, PsbD, PsbE, PsbF, PsbH, PsbI, PsbJ, PsbK, PsbL, PsbM, PsbT, PsbX, PsbY, PsbZ, Psb30/Ycf12, peripheral proteins PsbO, CyanoQ (PsbQ), PsbU, PsbV and a large number of cofactors. It forms dimeric complexes.</text>
</comment>
<comment type="subcellular location">
    <subcellularLocation>
        <location evidence="1">Cellular thylakoid membrane</location>
        <topology evidence="1">Multi-pass membrane protein</topology>
    </subcellularLocation>
</comment>
<comment type="similarity">
    <text evidence="1">Belongs to the PsbZ family.</text>
</comment>
<feature type="chain" id="PRO_1000056941" description="Photosystem II reaction center protein Z">
    <location>
        <begin position="1"/>
        <end position="62"/>
    </location>
</feature>
<feature type="transmembrane region" description="Helical" evidence="1">
    <location>
        <begin position="8"/>
        <end position="28"/>
    </location>
</feature>
<feature type="transmembrane region" description="Helical" evidence="1">
    <location>
        <begin position="41"/>
        <end position="61"/>
    </location>
</feature>
<accession>Q3MCF9</accession>
<evidence type="ECO:0000255" key="1">
    <source>
        <dbReference type="HAMAP-Rule" id="MF_00644"/>
    </source>
</evidence>